<organism>
    <name type="scientific">Oryza sativa subsp. japonica</name>
    <name type="common">Rice</name>
    <dbReference type="NCBI Taxonomy" id="39947"/>
    <lineage>
        <taxon>Eukaryota</taxon>
        <taxon>Viridiplantae</taxon>
        <taxon>Streptophyta</taxon>
        <taxon>Embryophyta</taxon>
        <taxon>Tracheophyta</taxon>
        <taxon>Spermatophyta</taxon>
        <taxon>Magnoliopsida</taxon>
        <taxon>Liliopsida</taxon>
        <taxon>Poales</taxon>
        <taxon>Poaceae</taxon>
        <taxon>BOP clade</taxon>
        <taxon>Oryzoideae</taxon>
        <taxon>Oryzeae</taxon>
        <taxon>Oryzinae</taxon>
        <taxon>Oryza</taxon>
        <taxon>Oryza sativa</taxon>
    </lineage>
</organism>
<reference key="1">
    <citation type="journal article" date="2005" name="Nature">
        <title>The map-based sequence of the rice genome.</title>
        <authorList>
            <consortium name="International rice genome sequencing project (IRGSP)"/>
        </authorList>
    </citation>
    <scope>NUCLEOTIDE SEQUENCE [LARGE SCALE GENOMIC DNA]</scope>
    <source>
        <strain>cv. Nipponbare</strain>
    </source>
</reference>
<reference key="2">
    <citation type="journal article" date="2013" name="Rice">
        <title>Improvement of the Oryza sativa Nipponbare reference genome using next generation sequence and optical map data.</title>
        <authorList>
            <person name="Kawahara Y."/>
            <person name="de la Bastide M."/>
            <person name="Hamilton J.P."/>
            <person name="Kanamori H."/>
            <person name="McCombie W.R."/>
            <person name="Ouyang S."/>
            <person name="Schwartz D.C."/>
            <person name="Tanaka T."/>
            <person name="Wu J."/>
            <person name="Zhou S."/>
            <person name="Childs K.L."/>
            <person name="Davidson R.M."/>
            <person name="Lin H."/>
            <person name="Quesada-Ocampo L."/>
            <person name="Vaillancourt B."/>
            <person name="Sakai H."/>
            <person name="Lee S.S."/>
            <person name="Kim J."/>
            <person name="Numa H."/>
            <person name="Itoh T."/>
            <person name="Buell C.R."/>
            <person name="Matsumoto T."/>
        </authorList>
    </citation>
    <scope>GENOME REANNOTATION</scope>
    <source>
        <strain>cv. Nipponbare</strain>
    </source>
</reference>
<reference key="3">
    <citation type="journal article" date="2005" name="PLoS Biol.">
        <title>The genomes of Oryza sativa: a history of duplications.</title>
        <authorList>
            <person name="Yu J."/>
            <person name="Wang J."/>
            <person name="Lin W."/>
            <person name="Li S."/>
            <person name="Li H."/>
            <person name="Zhou J."/>
            <person name="Ni P."/>
            <person name="Dong W."/>
            <person name="Hu S."/>
            <person name="Zeng C."/>
            <person name="Zhang J."/>
            <person name="Zhang Y."/>
            <person name="Li R."/>
            <person name="Xu Z."/>
            <person name="Li S."/>
            <person name="Li X."/>
            <person name="Zheng H."/>
            <person name="Cong L."/>
            <person name="Lin L."/>
            <person name="Yin J."/>
            <person name="Geng J."/>
            <person name="Li G."/>
            <person name="Shi J."/>
            <person name="Liu J."/>
            <person name="Lv H."/>
            <person name="Li J."/>
            <person name="Wang J."/>
            <person name="Deng Y."/>
            <person name="Ran L."/>
            <person name="Shi X."/>
            <person name="Wang X."/>
            <person name="Wu Q."/>
            <person name="Li C."/>
            <person name="Ren X."/>
            <person name="Wang J."/>
            <person name="Wang X."/>
            <person name="Li D."/>
            <person name="Liu D."/>
            <person name="Zhang X."/>
            <person name="Ji Z."/>
            <person name="Zhao W."/>
            <person name="Sun Y."/>
            <person name="Zhang Z."/>
            <person name="Bao J."/>
            <person name="Han Y."/>
            <person name="Dong L."/>
            <person name="Ji J."/>
            <person name="Chen P."/>
            <person name="Wu S."/>
            <person name="Liu J."/>
            <person name="Xiao Y."/>
            <person name="Bu D."/>
            <person name="Tan J."/>
            <person name="Yang L."/>
            <person name="Ye C."/>
            <person name="Zhang J."/>
            <person name="Xu J."/>
            <person name="Zhou Y."/>
            <person name="Yu Y."/>
            <person name="Zhang B."/>
            <person name="Zhuang S."/>
            <person name="Wei H."/>
            <person name="Liu B."/>
            <person name="Lei M."/>
            <person name="Yu H."/>
            <person name="Li Y."/>
            <person name="Xu H."/>
            <person name="Wei S."/>
            <person name="He X."/>
            <person name="Fang L."/>
            <person name="Zhang Z."/>
            <person name="Zhang Y."/>
            <person name="Huang X."/>
            <person name="Su Z."/>
            <person name="Tong W."/>
            <person name="Li J."/>
            <person name="Tong Z."/>
            <person name="Li S."/>
            <person name="Ye J."/>
            <person name="Wang L."/>
            <person name="Fang L."/>
            <person name="Lei T."/>
            <person name="Chen C.-S."/>
            <person name="Chen H.-C."/>
            <person name="Xu Z."/>
            <person name="Li H."/>
            <person name="Huang H."/>
            <person name="Zhang F."/>
            <person name="Xu H."/>
            <person name="Li N."/>
            <person name="Zhao C."/>
            <person name="Li S."/>
            <person name="Dong L."/>
            <person name="Huang Y."/>
            <person name="Li L."/>
            <person name="Xi Y."/>
            <person name="Qi Q."/>
            <person name="Li W."/>
            <person name="Zhang B."/>
            <person name="Hu W."/>
            <person name="Zhang Y."/>
            <person name="Tian X."/>
            <person name="Jiao Y."/>
            <person name="Liang X."/>
            <person name="Jin J."/>
            <person name="Gao L."/>
            <person name="Zheng W."/>
            <person name="Hao B."/>
            <person name="Liu S.-M."/>
            <person name="Wang W."/>
            <person name="Yuan L."/>
            <person name="Cao M."/>
            <person name="McDermott J."/>
            <person name="Samudrala R."/>
            <person name="Wang J."/>
            <person name="Wong G.K.-S."/>
            <person name="Yang H."/>
        </authorList>
    </citation>
    <scope>NUCLEOTIDE SEQUENCE [LARGE SCALE GENOMIC DNA]</scope>
    <source>
        <strain>cv. Nipponbare</strain>
    </source>
</reference>
<reference key="4">
    <citation type="journal article" date="2008" name="Plant Mol. Biol.">
        <title>A genome-wide survey of HD-Zip genes in rice and analysis of drought-responsive family members.</title>
        <authorList>
            <person name="Agalou A."/>
            <person name="Purwantomo S."/>
            <person name="Oevernaes E."/>
            <person name="Johannesson H."/>
            <person name="Zhu X."/>
            <person name="Estiati A."/>
            <person name="de Kam R.J."/>
            <person name="Engstroem P."/>
            <person name="Slamet-Loedin I.H."/>
            <person name="Zhu Z."/>
            <person name="Wang M."/>
            <person name="Xiong L."/>
            <person name="Meijer A.H."/>
            <person name="Ouwerkerk P.B.F."/>
        </authorList>
    </citation>
    <scope>GENE FAMILY</scope>
    <scope>NOMENCLATURE</scope>
</reference>
<name>HOX26_ORYSJ</name>
<keyword id="KW-0238">DNA-binding</keyword>
<keyword id="KW-0371">Homeobox</keyword>
<keyword id="KW-0539">Nucleus</keyword>
<keyword id="KW-1185">Reference proteome</keyword>
<keyword id="KW-0804">Transcription</keyword>
<keyword id="KW-0805">Transcription regulation</keyword>
<proteinExistence type="inferred from homology"/>
<sequence length="248" mass="26664">MSSSSLTTTSSMDSVVDGGLDTRLSLAVGCCPPRRRPVLLFGEVLPSPEKKVAAAAVVAAGKRGREQRGEAEAEATTTRQRRSCKKGRRGRGDDDDDDGDRRSPSGGGGDEEGASRKKLRLTGEQATLLEDSFRAHNILSHAEKQELAGKLGLSARQVEVWFQNRRARTKLKQTEADCDLLRRWCDHLAADNARLRRDLAELRRSSSSPPVSGLAVATPVVCPSCAHDDKRRLAFATAAAAAGDMASN</sequence>
<gene>
    <name type="primary">HOX26</name>
    <name type="ordered locus">Os02g0149900</name>
    <name type="ordered locus">LOC_Os02g05640</name>
    <name type="ORF">OsJ_005235</name>
    <name type="ORF">OSJNBa0050G13.4</name>
</gene>
<protein>
    <recommendedName>
        <fullName>Putative homeobox-leucine zipper protein HOX26</fullName>
    </recommendedName>
    <alternativeName>
        <fullName>HD-ZIP protein HOX26</fullName>
    </alternativeName>
    <alternativeName>
        <fullName>Homeodomain transcription factor HOX26</fullName>
    </alternativeName>
    <alternativeName>
        <fullName>OsHox26</fullName>
    </alternativeName>
</protein>
<feature type="chain" id="PRO_0000331724" description="Putative homeobox-leucine zipper protein HOX26">
    <location>
        <begin position="1"/>
        <end position="248"/>
    </location>
</feature>
<feature type="DNA-binding region" description="Homeobox" evidence="2">
    <location>
        <begin position="114"/>
        <end position="173"/>
    </location>
</feature>
<feature type="region of interest" description="Disordered" evidence="3">
    <location>
        <begin position="50"/>
        <end position="118"/>
    </location>
</feature>
<feature type="region of interest" description="Leucine-zipper">
    <location>
        <begin position="172"/>
        <end position="216"/>
    </location>
</feature>
<feature type="compositionally biased region" description="Basic residues" evidence="3">
    <location>
        <begin position="79"/>
        <end position="89"/>
    </location>
</feature>
<evidence type="ECO:0000250" key="1"/>
<evidence type="ECO:0000255" key="2">
    <source>
        <dbReference type="PROSITE-ProRule" id="PRU00108"/>
    </source>
</evidence>
<evidence type="ECO:0000256" key="3">
    <source>
        <dbReference type="SAM" id="MobiDB-lite"/>
    </source>
</evidence>
<evidence type="ECO:0000305" key="4"/>
<comment type="function">
    <text evidence="1">Probable transcription factor.</text>
</comment>
<comment type="subcellular location">
    <subcellularLocation>
        <location evidence="4">Nucleus</location>
    </subcellularLocation>
</comment>
<comment type="similarity">
    <text evidence="4">Belongs to the HD-ZIP homeobox family. Class II subfamily.</text>
</comment>
<comment type="sequence caution" evidence="4">
    <conflict type="erroneous initiation">
        <sequence resource="EMBL-CDS" id="EAZ21752"/>
    </conflict>
</comment>
<dbReference type="EMBL" id="AP005412">
    <property type="protein sequence ID" value="BAD38043.1"/>
    <property type="molecule type" value="Genomic_DNA"/>
</dbReference>
<dbReference type="EMBL" id="AP014958">
    <property type="protein sequence ID" value="BAS76996.1"/>
    <property type="molecule type" value="Genomic_DNA"/>
</dbReference>
<dbReference type="EMBL" id="CM000139">
    <property type="protein sequence ID" value="EAZ21752.1"/>
    <property type="status" value="ALT_INIT"/>
    <property type="molecule type" value="Genomic_DNA"/>
</dbReference>
<dbReference type="SMR" id="Q67UX6"/>
<dbReference type="STRING" id="39947.Q67UX6"/>
<dbReference type="PaxDb" id="39947-Q67UX6"/>
<dbReference type="EnsemblPlants" id="Os02t0149900-00">
    <property type="protein sequence ID" value="Os02t0149900-00"/>
    <property type="gene ID" value="Os02g0149900"/>
</dbReference>
<dbReference type="GeneID" id="107276233"/>
<dbReference type="Gramene" id="Os02t0149900-00">
    <property type="protein sequence ID" value="Os02t0149900-00"/>
    <property type="gene ID" value="Os02g0149900"/>
</dbReference>
<dbReference type="KEGG" id="osa:107276233"/>
<dbReference type="eggNOG" id="KOG0483">
    <property type="taxonomic scope" value="Eukaryota"/>
</dbReference>
<dbReference type="HOGENOM" id="CLU_049516_3_0_1"/>
<dbReference type="InParanoid" id="Q67UX6"/>
<dbReference type="OMA" id="LRRWCEH"/>
<dbReference type="OrthoDB" id="6159439at2759"/>
<dbReference type="Proteomes" id="UP000000763">
    <property type="component" value="Chromosome 2"/>
</dbReference>
<dbReference type="Proteomes" id="UP000007752">
    <property type="component" value="Chromosome 2"/>
</dbReference>
<dbReference type="Proteomes" id="UP000059680">
    <property type="component" value="Chromosome 2"/>
</dbReference>
<dbReference type="GO" id="GO:0005634">
    <property type="term" value="C:nucleus"/>
    <property type="evidence" value="ECO:0007669"/>
    <property type="project" value="UniProtKB-SubCell"/>
</dbReference>
<dbReference type="GO" id="GO:0000981">
    <property type="term" value="F:DNA-binding transcription factor activity, RNA polymerase II-specific"/>
    <property type="evidence" value="ECO:0007669"/>
    <property type="project" value="InterPro"/>
</dbReference>
<dbReference type="GO" id="GO:0043565">
    <property type="term" value="F:sequence-specific DNA binding"/>
    <property type="evidence" value="ECO:0007669"/>
    <property type="project" value="InterPro"/>
</dbReference>
<dbReference type="CDD" id="cd00086">
    <property type="entry name" value="homeodomain"/>
    <property type="match status" value="1"/>
</dbReference>
<dbReference type="Gene3D" id="1.10.10.60">
    <property type="entry name" value="Homeodomain-like"/>
    <property type="match status" value="1"/>
</dbReference>
<dbReference type="InterPro" id="IPR001356">
    <property type="entry name" value="HD"/>
</dbReference>
<dbReference type="InterPro" id="IPR050762">
    <property type="entry name" value="HD-ZIP_Homeobox_LZ_Class_II"/>
</dbReference>
<dbReference type="InterPro" id="IPR017970">
    <property type="entry name" value="Homeobox_CS"/>
</dbReference>
<dbReference type="InterPro" id="IPR009057">
    <property type="entry name" value="Homeodomain-like_sf"/>
</dbReference>
<dbReference type="InterPro" id="IPR000047">
    <property type="entry name" value="HTH_motif"/>
</dbReference>
<dbReference type="InterPro" id="IPR003106">
    <property type="entry name" value="Leu_zip_homeo"/>
</dbReference>
<dbReference type="PANTHER" id="PTHR45714">
    <property type="entry name" value="HOMEOBOX-LEUCINE ZIPPER PROTEIN HAT14"/>
    <property type="match status" value="1"/>
</dbReference>
<dbReference type="PANTHER" id="PTHR45714:SF72">
    <property type="entry name" value="HOMEOBOX-LEUCINE ZIPPER PROTEIN HOX26-RELATED"/>
    <property type="match status" value="1"/>
</dbReference>
<dbReference type="Pfam" id="PF02183">
    <property type="entry name" value="HALZ"/>
    <property type="match status" value="1"/>
</dbReference>
<dbReference type="Pfam" id="PF00046">
    <property type="entry name" value="Homeodomain"/>
    <property type="match status" value="1"/>
</dbReference>
<dbReference type="PRINTS" id="PR00031">
    <property type="entry name" value="HTHREPRESSR"/>
</dbReference>
<dbReference type="SMART" id="SM00340">
    <property type="entry name" value="HALZ"/>
    <property type="match status" value="1"/>
</dbReference>
<dbReference type="SMART" id="SM00389">
    <property type="entry name" value="HOX"/>
    <property type="match status" value="1"/>
</dbReference>
<dbReference type="SUPFAM" id="SSF46689">
    <property type="entry name" value="Homeodomain-like"/>
    <property type="match status" value="1"/>
</dbReference>
<dbReference type="PROSITE" id="PS00027">
    <property type="entry name" value="HOMEOBOX_1"/>
    <property type="match status" value="1"/>
</dbReference>
<dbReference type="PROSITE" id="PS50071">
    <property type="entry name" value="HOMEOBOX_2"/>
    <property type="match status" value="1"/>
</dbReference>
<accession>Q67UX6</accession>
<accession>A0A0P0VEP2</accession>
<accession>A3A363</accession>